<feature type="chain" id="PRO_0000153327" description="Histidinol-phosphate aminotransferase">
    <location>
        <begin position="1"/>
        <end position="365"/>
    </location>
</feature>
<feature type="modified residue" description="N6-(pyridoxal phosphate)lysine" evidence="1">
    <location>
        <position position="223"/>
    </location>
</feature>
<proteinExistence type="inferred from homology"/>
<name>HIS8_BRUME</name>
<reference key="1">
    <citation type="journal article" date="2002" name="Proc. Natl. Acad. Sci. U.S.A.">
        <title>The genome sequence of the facultative intracellular pathogen Brucella melitensis.</title>
        <authorList>
            <person name="DelVecchio V.G."/>
            <person name="Kapatral V."/>
            <person name="Redkar R.J."/>
            <person name="Patra G."/>
            <person name="Mujer C."/>
            <person name="Los T."/>
            <person name="Ivanova N."/>
            <person name="Anderson I."/>
            <person name="Bhattacharyya A."/>
            <person name="Lykidis A."/>
            <person name="Reznik G."/>
            <person name="Jablonski L."/>
            <person name="Larsen N."/>
            <person name="D'Souza M."/>
            <person name="Bernal A."/>
            <person name="Mazur M."/>
            <person name="Goltsman E."/>
            <person name="Selkov E."/>
            <person name="Elzer P.H."/>
            <person name="Hagius S."/>
            <person name="O'Callaghan D."/>
            <person name="Letesson J.-J."/>
            <person name="Haselkorn R."/>
            <person name="Kyrpides N.C."/>
            <person name="Overbeek R."/>
        </authorList>
    </citation>
    <scope>NUCLEOTIDE SEQUENCE [LARGE SCALE GENOMIC DNA]</scope>
    <source>
        <strain>ATCC 23456 / CCUG 17765 / NCTC 10094 / 16M</strain>
    </source>
</reference>
<keyword id="KW-0028">Amino-acid biosynthesis</keyword>
<keyword id="KW-0032">Aminotransferase</keyword>
<keyword id="KW-0368">Histidine biosynthesis</keyword>
<keyword id="KW-0663">Pyridoxal phosphate</keyword>
<keyword id="KW-0808">Transferase</keyword>
<dbReference type="EC" id="2.6.1.9" evidence="1"/>
<dbReference type="EMBL" id="AE008917">
    <property type="protein sequence ID" value="AAL51262.1"/>
    <property type="molecule type" value="Genomic_DNA"/>
</dbReference>
<dbReference type="PIR" id="AC3262">
    <property type="entry name" value="AC3262"/>
</dbReference>
<dbReference type="SMR" id="Q8YJK3"/>
<dbReference type="KEGG" id="bme:BMEI0080"/>
<dbReference type="eggNOG" id="COG0079">
    <property type="taxonomic scope" value="Bacteria"/>
</dbReference>
<dbReference type="UniPathway" id="UPA00031">
    <property type="reaction ID" value="UER00012"/>
</dbReference>
<dbReference type="Proteomes" id="UP000000419">
    <property type="component" value="Chromosome I"/>
</dbReference>
<dbReference type="GO" id="GO:0004400">
    <property type="term" value="F:histidinol-phosphate transaminase activity"/>
    <property type="evidence" value="ECO:0007669"/>
    <property type="project" value="UniProtKB-UniRule"/>
</dbReference>
<dbReference type="GO" id="GO:0030170">
    <property type="term" value="F:pyridoxal phosphate binding"/>
    <property type="evidence" value="ECO:0007669"/>
    <property type="project" value="InterPro"/>
</dbReference>
<dbReference type="GO" id="GO:0000105">
    <property type="term" value="P:L-histidine biosynthetic process"/>
    <property type="evidence" value="ECO:0007669"/>
    <property type="project" value="UniProtKB-UniRule"/>
</dbReference>
<dbReference type="CDD" id="cd00609">
    <property type="entry name" value="AAT_like"/>
    <property type="match status" value="1"/>
</dbReference>
<dbReference type="Gene3D" id="3.90.1150.10">
    <property type="entry name" value="Aspartate Aminotransferase, domain 1"/>
    <property type="match status" value="1"/>
</dbReference>
<dbReference type="Gene3D" id="3.40.640.10">
    <property type="entry name" value="Type I PLP-dependent aspartate aminotransferase-like (Major domain)"/>
    <property type="match status" value="1"/>
</dbReference>
<dbReference type="HAMAP" id="MF_01023">
    <property type="entry name" value="HisC_aminotrans_2"/>
    <property type="match status" value="1"/>
</dbReference>
<dbReference type="InterPro" id="IPR004839">
    <property type="entry name" value="Aminotransferase_I/II_large"/>
</dbReference>
<dbReference type="InterPro" id="IPR005861">
    <property type="entry name" value="HisP_aminotrans"/>
</dbReference>
<dbReference type="InterPro" id="IPR050106">
    <property type="entry name" value="HistidinolP_aminotransfase"/>
</dbReference>
<dbReference type="InterPro" id="IPR015424">
    <property type="entry name" value="PyrdxlP-dep_Trfase"/>
</dbReference>
<dbReference type="InterPro" id="IPR015421">
    <property type="entry name" value="PyrdxlP-dep_Trfase_major"/>
</dbReference>
<dbReference type="InterPro" id="IPR015422">
    <property type="entry name" value="PyrdxlP-dep_Trfase_small"/>
</dbReference>
<dbReference type="NCBIfam" id="TIGR01141">
    <property type="entry name" value="hisC"/>
    <property type="match status" value="1"/>
</dbReference>
<dbReference type="PANTHER" id="PTHR43643:SF3">
    <property type="entry name" value="HISTIDINOL-PHOSPHATE AMINOTRANSFERASE"/>
    <property type="match status" value="1"/>
</dbReference>
<dbReference type="PANTHER" id="PTHR43643">
    <property type="entry name" value="HISTIDINOL-PHOSPHATE AMINOTRANSFERASE 2"/>
    <property type="match status" value="1"/>
</dbReference>
<dbReference type="Pfam" id="PF00155">
    <property type="entry name" value="Aminotran_1_2"/>
    <property type="match status" value="1"/>
</dbReference>
<dbReference type="SUPFAM" id="SSF53383">
    <property type="entry name" value="PLP-dependent transferases"/>
    <property type="match status" value="1"/>
</dbReference>
<comment type="catalytic activity">
    <reaction evidence="1">
        <text>L-histidinol phosphate + 2-oxoglutarate = 3-(imidazol-4-yl)-2-oxopropyl phosphate + L-glutamate</text>
        <dbReference type="Rhea" id="RHEA:23744"/>
        <dbReference type="ChEBI" id="CHEBI:16810"/>
        <dbReference type="ChEBI" id="CHEBI:29985"/>
        <dbReference type="ChEBI" id="CHEBI:57766"/>
        <dbReference type="ChEBI" id="CHEBI:57980"/>
        <dbReference type="EC" id="2.6.1.9"/>
    </reaction>
</comment>
<comment type="cofactor">
    <cofactor evidence="1">
        <name>pyridoxal 5'-phosphate</name>
        <dbReference type="ChEBI" id="CHEBI:597326"/>
    </cofactor>
</comment>
<comment type="pathway">
    <text evidence="1">Amino-acid biosynthesis; L-histidine biosynthesis; L-histidine from 5-phospho-alpha-D-ribose 1-diphosphate: step 7/9.</text>
</comment>
<comment type="subunit">
    <text evidence="1">Homodimer.</text>
</comment>
<comment type="similarity">
    <text evidence="1">Belongs to the class-II pyridoxal-phosphate-dependent aminotransferase family. Histidinol-phosphate aminotransferase subfamily.</text>
</comment>
<protein>
    <recommendedName>
        <fullName evidence="1">Histidinol-phosphate aminotransferase</fullName>
        <ecNumber evidence="1">2.6.1.9</ecNumber>
    </recommendedName>
    <alternativeName>
        <fullName evidence="1">Imidazole acetol-phosphate transaminase</fullName>
    </alternativeName>
</protein>
<evidence type="ECO:0000255" key="1">
    <source>
        <dbReference type="HAMAP-Rule" id="MF_01023"/>
    </source>
</evidence>
<sequence length="365" mass="39997">MQKPTRPQPKAGVLDIAAYVPGKEHVEGVAKVYKLSSNETPLGPSPHAREAYRHAGEKLELYPDGQALALRQAIAETQGLNISNILCGNGSDELLGLLCQTYLAPGDETIITEHGFAVYKIQTLAAGATPVTVKEKNERIDVDAILAGVTARTKIVFIANPANPTGTYLPFEEVRRLHAGLPQHVLLVLDAAYAEYVRRNDYEAGLELVSSNENVVMMRTFSKIHGLPGLRIGWIYAPLHIIDAMNRIRGPFNMNSAAIAAGAAAIRDRAHVEKSVAYNEKWLAWLTEEFTRLGLRVTPSVTNFLLIHFPDDAAHSADKADEWLSRRGYILRRVGGYGFPNALRMTVGPEEANRGVVAALTEFLK</sequence>
<organism>
    <name type="scientific">Brucella melitensis biotype 1 (strain ATCC 23456 / CCUG 17765 / NCTC 10094 / 16M)</name>
    <dbReference type="NCBI Taxonomy" id="224914"/>
    <lineage>
        <taxon>Bacteria</taxon>
        <taxon>Pseudomonadati</taxon>
        <taxon>Pseudomonadota</taxon>
        <taxon>Alphaproteobacteria</taxon>
        <taxon>Hyphomicrobiales</taxon>
        <taxon>Brucellaceae</taxon>
        <taxon>Brucella/Ochrobactrum group</taxon>
        <taxon>Brucella</taxon>
    </lineage>
</organism>
<gene>
    <name evidence="1" type="primary">hisC</name>
    <name type="ordered locus">BMEI0080</name>
</gene>
<accession>Q8YJK3</accession>